<protein>
    <recommendedName>
        <fullName evidence="5">Potassium channel toxin alpha-KTx 2.10</fullName>
    </recommendedName>
    <alternativeName>
        <fullName evidence="5">CboK5</fullName>
    </alternativeName>
    <alternativeName>
        <fullName evidence="2">Toxin Ce3</fullName>
    </alternativeName>
</protein>
<proteinExistence type="evidence at protein level"/>
<name>KAX2A_CENBO</name>
<feature type="chain" id="PRO_0000459534" description="Potassium channel toxin alpha-KTx 2.10">
    <location>
        <begin position="1"/>
        <end position="38"/>
    </location>
</feature>
<feature type="site" description="Basic residue of the functional dyad" evidence="1">
    <location>
        <position position="28"/>
    </location>
</feature>
<feature type="site" description="Aromatic residue of the functional dyad" evidence="1">
    <location>
        <position position="37"/>
    </location>
</feature>
<feature type="disulfide bond" evidence="3">
    <location>
        <begin position="7"/>
        <end position="29"/>
    </location>
</feature>
<feature type="disulfide bond" evidence="3">
    <location>
        <begin position="13"/>
        <end position="34"/>
    </location>
</feature>
<feature type="disulfide bond" evidence="3">
    <location>
        <begin position="17"/>
        <end position="36"/>
    </location>
</feature>
<feature type="non-terminal residue" evidence="5">
    <location>
        <position position="38"/>
    </location>
</feature>
<sequence length="38" mass="4255">IFINVKCSLPQQCLRPCKDRFGQHAGGKCINGKCKCYP</sequence>
<keyword id="KW-0903">Direct protein sequencing</keyword>
<keyword id="KW-1015">Disulfide bond</keyword>
<keyword id="KW-0872">Ion channel impairing toxin</keyword>
<keyword id="KW-0528">Neurotoxin</keyword>
<keyword id="KW-0632">Potassium channel impairing toxin</keyword>
<keyword id="KW-0964">Secreted</keyword>
<keyword id="KW-0800">Toxin</keyword>
<keyword id="KW-1220">Voltage-gated potassium channel impairing toxin</keyword>
<reference evidence="6" key="1">
    <citation type="journal article" date="2023" name="Toxins">
        <title>Of Seven New K+ Channel Inhibitor Peptides of Centruroides bonito, alpha-KTx 2.24 Has a Picomolar Affinity for Kv1.2.</title>
        <authorList>
            <person name="Shakeel K."/>
            <person name="Olamendi-Portugal T."/>
            <person name="Naseem M.U."/>
            <person name="Becerril B."/>
            <person name="Zamudio F.Z."/>
            <person name="Delgado-Prudencio G."/>
            <person name="Possani L.D."/>
            <person name="Panyi G."/>
        </authorList>
    </citation>
    <scope>PROTEIN SEQUENCE</scope>
    <scope>FUNCTION</scope>
    <scope>SUBCELLULAR LOCATION</scope>
    <scope>TISSUE SPECIFICITY</scope>
    <scope>MASS SPECTROMETRY</scope>
</reference>
<accession>C0HM74</accession>
<comment type="function">
    <text evidence="4">Blocks human voltage-gated potassium (Kv) channel Kv1.2/KCNA2. Does not inhibit human Kv1.1/KCNA1 at 100nM concentration.</text>
</comment>
<comment type="subcellular location">
    <subcellularLocation>
        <location evidence="4">Secreted</location>
    </subcellularLocation>
</comment>
<comment type="tissue specificity">
    <text evidence="7">Expressed by the venom gland.</text>
</comment>
<comment type="mass spectrometry" mass="4249.8" method="Electrospray" evidence="4"/>
<comment type="similarity">
    <text evidence="6">Belongs to the short scorpion toxin superfamily. Potassium channel inhibitor family. Alpha-KTx 02 subfamily.</text>
</comment>
<organism>
    <name type="scientific">Centruroides bonito</name>
    <name type="common">Scorpion</name>
    <dbReference type="NCBI Taxonomy" id="3035065"/>
    <lineage>
        <taxon>Eukaryota</taxon>
        <taxon>Metazoa</taxon>
        <taxon>Ecdysozoa</taxon>
        <taxon>Arthropoda</taxon>
        <taxon>Chelicerata</taxon>
        <taxon>Arachnida</taxon>
        <taxon>Scorpiones</taxon>
        <taxon>Buthida</taxon>
        <taxon>Buthoidea</taxon>
        <taxon>Buthidae</taxon>
        <taxon>Centruroides</taxon>
    </lineage>
</organism>
<evidence type="ECO:0000250" key="1">
    <source>
        <dbReference type="UniProtKB" id="O46028"/>
    </source>
</evidence>
<evidence type="ECO:0000250" key="2">
    <source>
        <dbReference type="UniProtKB" id="P0C163"/>
    </source>
</evidence>
<evidence type="ECO:0000250" key="3">
    <source>
        <dbReference type="UniProtKB" id="P40755"/>
    </source>
</evidence>
<evidence type="ECO:0000269" key="4">
    <source>
    </source>
</evidence>
<evidence type="ECO:0000303" key="5">
    <source>
    </source>
</evidence>
<evidence type="ECO:0000305" key="6"/>
<evidence type="ECO:0000305" key="7">
    <source>
    </source>
</evidence>
<dbReference type="SMR" id="C0HM74"/>
<dbReference type="GO" id="GO:0005576">
    <property type="term" value="C:extracellular region"/>
    <property type="evidence" value="ECO:0007669"/>
    <property type="project" value="UniProtKB-SubCell"/>
</dbReference>
<dbReference type="GO" id="GO:0008200">
    <property type="term" value="F:ion channel inhibitor activity"/>
    <property type="evidence" value="ECO:0007669"/>
    <property type="project" value="InterPro"/>
</dbReference>
<dbReference type="GO" id="GO:0015459">
    <property type="term" value="F:potassium channel regulator activity"/>
    <property type="evidence" value="ECO:0007669"/>
    <property type="project" value="UniProtKB-KW"/>
</dbReference>
<dbReference type="GO" id="GO:0090729">
    <property type="term" value="F:toxin activity"/>
    <property type="evidence" value="ECO:0007669"/>
    <property type="project" value="UniProtKB-KW"/>
</dbReference>
<dbReference type="FunFam" id="3.30.30.10:FF:000009">
    <property type="entry name" value="Potassium channel toxin alpha-KTx 4.3"/>
    <property type="match status" value="1"/>
</dbReference>
<dbReference type="Gene3D" id="3.30.30.10">
    <property type="entry name" value="Knottin, scorpion toxin-like"/>
    <property type="match status" value="1"/>
</dbReference>
<dbReference type="InterPro" id="IPR036574">
    <property type="entry name" value="Scorpion_toxin-like_sf"/>
</dbReference>
<dbReference type="InterPro" id="IPR001947">
    <property type="entry name" value="Scorpion_toxinS_K_inh"/>
</dbReference>
<dbReference type="Pfam" id="PF00451">
    <property type="entry name" value="Toxin_2"/>
    <property type="match status" value="1"/>
</dbReference>
<dbReference type="PRINTS" id="PR00286">
    <property type="entry name" value="CHARYBDTOXIN"/>
</dbReference>
<dbReference type="SUPFAM" id="SSF57095">
    <property type="entry name" value="Scorpion toxin-like"/>
    <property type="match status" value="1"/>
</dbReference>